<dbReference type="EC" id="2.7.4.3" evidence="1"/>
<dbReference type="EMBL" id="CP000962">
    <property type="protein sequence ID" value="ACA53909.1"/>
    <property type="molecule type" value="Genomic_DNA"/>
</dbReference>
<dbReference type="RefSeq" id="WP_012342083.1">
    <property type="nucleotide sequence ID" value="NC_010520.1"/>
</dbReference>
<dbReference type="SMR" id="B1KSK4"/>
<dbReference type="KEGG" id="cbl:CLK_2903"/>
<dbReference type="HOGENOM" id="CLU_032354_1_2_9"/>
<dbReference type="UniPathway" id="UPA00588">
    <property type="reaction ID" value="UER00649"/>
</dbReference>
<dbReference type="GO" id="GO:0005737">
    <property type="term" value="C:cytoplasm"/>
    <property type="evidence" value="ECO:0007669"/>
    <property type="project" value="UniProtKB-SubCell"/>
</dbReference>
<dbReference type="GO" id="GO:0004017">
    <property type="term" value="F:adenylate kinase activity"/>
    <property type="evidence" value="ECO:0007669"/>
    <property type="project" value="UniProtKB-UniRule"/>
</dbReference>
<dbReference type="GO" id="GO:0005524">
    <property type="term" value="F:ATP binding"/>
    <property type="evidence" value="ECO:0007669"/>
    <property type="project" value="UniProtKB-UniRule"/>
</dbReference>
<dbReference type="GO" id="GO:0008270">
    <property type="term" value="F:zinc ion binding"/>
    <property type="evidence" value="ECO:0007669"/>
    <property type="project" value="UniProtKB-UniRule"/>
</dbReference>
<dbReference type="GO" id="GO:0044209">
    <property type="term" value="P:AMP salvage"/>
    <property type="evidence" value="ECO:0007669"/>
    <property type="project" value="UniProtKB-UniRule"/>
</dbReference>
<dbReference type="CDD" id="cd01428">
    <property type="entry name" value="ADK"/>
    <property type="match status" value="1"/>
</dbReference>
<dbReference type="FunFam" id="3.40.50.300:FF:000106">
    <property type="entry name" value="Adenylate kinase mitochondrial"/>
    <property type="match status" value="1"/>
</dbReference>
<dbReference type="Gene3D" id="3.40.50.300">
    <property type="entry name" value="P-loop containing nucleotide triphosphate hydrolases"/>
    <property type="match status" value="1"/>
</dbReference>
<dbReference type="HAMAP" id="MF_00235">
    <property type="entry name" value="Adenylate_kinase_Adk"/>
    <property type="match status" value="1"/>
</dbReference>
<dbReference type="InterPro" id="IPR006259">
    <property type="entry name" value="Adenyl_kin_sub"/>
</dbReference>
<dbReference type="InterPro" id="IPR000850">
    <property type="entry name" value="Adenylat/UMP-CMP_kin"/>
</dbReference>
<dbReference type="InterPro" id="IPR033690">
    <property type="entry name" value="Adenylat_kinase_CS"/>
</dbReference>
<dbReference type="InterPro" id="IPR007862">
    <property type="entry name" value="Adenylate_kinase_lid-dom"/>
</dbReference>
<dbReference type="InterPro" id="IPR027417">
    <property type="entry name" value="P-loop_NTPase"/>
</dbReference>
<dbReference type="NCBIfam" id="TIGR01351">
    <property type="entry name" value="adk"/>
    <property type="match status" value="1"/>
</dbReference>
<dbReference type="NCBIfam" id="NF001379">
    <property type="entry name" value="PRK00279.1-1"/>
    <property type="match status" value="1"/>
</dbReference>
<dbReference type="NCBIfam" id="NF001380">
    <property type="entry name" value="PRK00279.1-2"/>
    <property type="match status" value="1"/>
</dbReference>
<dbReference type="NCBIfam" id="NF001381">
    <property type="entry name" value="PRK00279.1-3"/>
    <property type="match status" value="1"/>
</dbReference>
<dbReference type="NCBIfam" id="NF011100">
    <property type="entry name" value="PRK14527.1"/>
    <property type="match status" value="1"/>
</dbReference>
<dbReference type="PANTHER" id="PTHR23359">
    <property type="entry name" value="NUCLEOTIDE KINASE"/>
    <property type="match status" value="1"/>
</dbReference>
<dbReference type="Pfam" id="PF00406">
    <property type="entry name" value="ADK"/>
    <property type="match status" value="1"/>
</dbReference>
<dbReference type="Pfam" id="PF05191">
    <property type="entry name" value="ADK_lid"/>
    <property type="match status" value="1"/>
</dbReference>
<dbReference type="PRINTS" id="PR00094">
    <property type="entry name" value="ADENYLTKNASE"/>
</dbReference>
<dbReference type="SUPFAM" id="SSF52540">
    <property type="entry name" value="P-loop containing nucleoside triphosphate hydrolases"/>
    <property type="match status" value="1"/>
</dbReference>
<dbReference type="PROSITE" id="PS00113">
    <property type="entry name" value="ADENYLATE_KINASE"/>
    <property type="match status" value="1"/>
</dbReference>
<gene>
    <name evidence="1" type="primary">adk</name>
    <name type="ordered locus">CLK_2903</name>
</gene>
<proteinExistence type="inferred from homology"/>
<name>KAD_CLOBM</name>
<evidence type="ECO:0000255" key="1">
    <source>
        <dbReference type="HAMAP-Rule" id="MF_00235"/>
    </source>
</evidence>
<feature type="chain" id="PRO_1000100551" description="Adenylate kinase">
    <location>
        <begin position="1"/>
        <end position="216"/>
    </location>
</feature>
<feature type="region of interest" description="NMP" evidence="1">
    <location>
        <begin position="30"/>
        <end position="59"/>
    </location>
</feature>
<feature type="region of interest" description="LID" evidence="1">
    <location>
        <begin position="126"/>
        <end position="163"/>
    </location>
</feature>
<feature type="binding site" evidence="1">
    <location>
        <begin position="10"/>
        <end position="15"/>
    </location>
    <ligand>
        <name>ATP</name>
        <dbReference type="ChEBI" id="CHEBI:30616"/>
    </ligand>
</feature>
<feature type="binding site" evidence="1">
    <location>
        <position position="31"/>
    </location>
    <ligand>
        <name>AMP</name>
        <dbReference type="ChEBI" id="CHEBI:456215"/>
    </ligand>
</feature>
<feature type="binding site" evidence="1">
    <location>
        <position position="36"/>
    </location>
    <ligand>
        <name>AMP</name>
        <dbReference type="ChEBI" id="CHEBI:456215"/>
    </ligand>
</feature>
<feature type="binding site" evidence="1">
    <location>
        <begin position="57"/>
        <end position="59"/>
    </location>
    <ligand>
        <name>AMP</name>
        <dbReference type="ChEBI" id="CHEBI:456215"/>
    </ligand>
</feature>
<feature type="binding site" evidence="1">
    <location>
        <begin position="85"/>
        <end position="88"/>
    </location>
    <ligand>
        <name>AMP</name>
        <dbReference type="ChEBI" id="CHEBI:456215"/>
    </ligand>
</feature>
<feature type="binding site" evidence="1">
    <location>
        <position position="92"/>
    </location>
    <ligand>
        <name>AMP</name>
        <dbReference type="ChEBI" id="CHEBI:456215"/>
    </ligand>
</feature>
<feature type="binding site" evidence="1">
    <location>
        <position position="127"/>
    </location>
    <ligand>
        <name>ATP</name>
        <dbReference type="ChEBI" id="CHEBI:30616"/>
    </ligand>
</feature>
<feature type="binding site" evidence="1">
    <location>
        <position position="130"/>
    </location>
    <ligand>
        <name>Zn(2+)</name>
        <dbReference type="ChEBI" id="CHEBI:29105"/>
        <note>structural</note>
    </ligand>
</feature>
<feature type="binding site" evidence="1">
    <location>
        <position position="133"/>
    </location>
    <ligand>
        <name>Zn(2+)</name>
        <dbReference type="ChEBI" id="CHEBI:29105"/>
        <note>structural</note>
    </ligand>
</feature>
<feature type="binding site" evidence="1">
    <location>
        <begin position="136"/>
        <end position="137"/>
    </location>
    <ligand>
        <name>ATP</name>
        <dbReference type="ChEBI" id="CHEBI:30616"/>
    </ligand>
</feature>
<feature type="binding site" evidence="1">
    <location>
        <position position="150"/>
    </location>
    <ligand>
        <name>Zn(2+)</name>
        <dbReference type="ChEBI" id="CHEBI:29105"/>
        <note>structural</note>
    </ligand>
</feature>
<feature type="binding site" evidence="1">
    <location>
        <position position="153"/>
    </location>
    <ligand>
        <name>Zn(2+)</name>
        <dbReference type="ChEBI" id="CHEBI:29105"/>
        <note>structural</note>
    </ligand>
</feature>
<feature type="binding site" evidence="1">
    <location>
        <position position="160"/>
    </location>
    <ligand>
        <name>AMP</name>
        <dbReference type="ChEBI" id="CHEBI:456215"/>
    </ligand>
</feature>
<feature type="binding site" evidence="1">
    <location>
        <position position="171"/>
    </location>
    <ligand>
        <name>AMP</name>
        <dbReference type="ChEBI" id="CHEBI:456215"/>
    </ligand>
</feature>
<feature type="binding site" evidence="1">
    <location>
        <position position="199"/>
    </location>
    <ligand>
        <name>ATP</name>
        <dbReference type="ChEBI" id="CHEBI:30616"/>
    </ligand>
</feature>
<keyword id="KW-0067">ATP-binding</keyword>
<keyword id="KW-0963">Cytoplasm</keyword>
<keyword id="KW-0418">Kinase</keyword>
<keyword id="KW-0479">Metal-binding</keyword>
<keyword id="KW-0545">Nucleotide biosynthesis</keyword>
<keyword id="KW-0547">Nucleotide-binding</keyword>
<keyword id="KW-0808">Transferase</keyword>
<keyword id="KW-0862">Zinc</keyword>
<protein>
    <recommendedName>
        <fullName evidence="1">Adenylate kinase</fullName>
        <shortName evidence="1">AK</shortName>
        <ecNumber evidence="1">2.7.4.3</ecNumber>
    </recommendedName>
    <alternativeName>
        <fullName evidence="1">ATP-AMP transphosphorylase</fullName>
    </alternativeName>
    <alternativeName>
        <fullName evidence="1">ATP:AMP phosphotransferase</fullName>
    </alternativeName>
    <alternativeName>
        <fullName evidence="1">Adenylate monophosphate kinase</fullName>
    </alternativeName>
</protein>
<sequence>MRVILLGPPGAGKGTQAKLISEKFSIPHISTGDIFRANIKEKTPLGIEAKRYMDNGQLVPDEVTIGIVKDRLTKDDCDNGFLLDGFPRTVAQAEALDEFLKGINKELDVALLIKVPEEFILERMTGRRVCTSCGASYHIRFNPPKIEGKCDICDNELIQRKDDTEATVKERLEVYSKQTYPLINYYKDNGIISEVNGTESIDEVFGNISNILGRDK</sequence>
<organism>
    <name type="scientific">Clostridium botulinum (strain Loch Maree / Type A3)</name>
    <dbReference type="NCBI Taxonomy" id="498214"/>
    <lineage>
        <taxon>Bacteria</taxon>
        <taxon>Bacillati</taxon>
        <taxon>Bacillota</taxon>
        <taxon>Clostridia</taxon>
        <taxon>Eubacteriales</taxon>
        <taxon>Clostridiaceae</taxon>
        <taxon>Clostridium</taxon>
    </lineage>
</organism>
<comment type="function">
    <text evidence="1">Catalyzes the reversible transfer of the terminal phosphate group between ATP and AMP. Plays an important role in cellular energy homeostasis and in adenine nucleotide metabolism.</text>
</comment>
<comment type="catalytic activity">
    <reaction evidence="1">
        <text>AMP + ATP = 2 ADP</text>
        <dbReference type="Rhea" id="RHEA:12973"/>
        <dbReference type="ChEBI" id="CHEBI:30616"/>
        <dbReference type="ChEBI" id="CHEBI:456215"/>
        <dbReference type="ChEBI" id="CHEBI:456216"/>
        <dbReference type="EC" id="2.7.4.3"/>
    </reaction>
</comment>
<comment type="pathway">
    <text evidence="1">Purine metabolism; AMP biosynthesis via salvage pathway; AMP from ADP: step 1/1.</text>
</comment>
<comment type="subunit">
    <text evidence="1">Monomer.</text>
</comment>
<comment type="subcellular location">
    <subcellularLocation>
        <location evidence="1">Cytoplasm</location>
    </subcellularLocation>
</comment>
<comment type="domain">
    <text evidence="1">Consists of three domains, a large central CORE domain and two small peripheral domains, NMPbind and LID, which undergo movements during catalysis. The LID domain closes over the site of phosphoryl transfer upon ATP binding. Assembling and dissambling the active center during each catalytic cycle provides an effective means to prevent ATP hydrolysis. Some bacteria have evolved a zinc-coordinating structure that stabilizes the LID domain.</text>
</comment>
<comment type="similarity">
    <text evidence="1">Belongs to the adenylate kinase family.</text>
</comment>
<reference key="1">
    <citation type="journal article" date="2007" name="PLoS ONE">
        <title>Analysis of the neurotoxin complex genes in Clostridium botulinum A1-A4 and B1 strains: BoNT/A3, /Ba4 and /B1 clusters are located within plasmids.</title>
        <authorList>
            <person name="Smith T.J."/>
            <person name="Hill K.K."/>
            <person name="Foley B.T."/>
            <person name="Detter J.C."/>
            <person name="Munk A.C."/>
            <person name="Bruce D.C."/>
            <person name="Doggett N.A."/>
            <person name="Smith L.A."/>
            <person name="Marks J.D."/>
            <person name="Xie G."/>
            <person name="Brettin T.S."/>
        </authorList>
    </citation>
    <scope>NUCLEOTIDE SEQUENCE [LARGE SCALE GENOMIC DNA]</scope>
    <source>
        <strain>Loch Maree / Type A3</strain>
    </source>
</reference>
<accession>B1KSK4</accession>